<keyword id="KW-0067">ATP-binding</keyword>
<keyword id="KW-1003">Cell membrane</keyword>
<keyword id="KW-0472">Membrane</keyword>
<keyword id="KW-0547">Nucleotide-binding</keyword>
<keyword id="KW-1185">Reference proteome</keyword>
<keyword id="KW-0677">Repeat</keyword>
<keyword id="KW-0812">Transmembrane</keyword>
<keyword id="KW-1133">Transmembrane helix</keyword>
<keyword id="KW-0813">Transport</keyword>
<feature type="chain" id="PRO_0000093266" description="Uncharacterized ABC transporter ATP-binding protein Rv2326c">
    <location>
        <begin position="1"/>
        <end position="697"/>
    </location>
</feature>
<feature type="transmembrane region" description="Helical" evidence="1">
    <location>
        <begin position="45"/>
        <end position="65"/>
    </location>
</feature>
<feature type="transmembrane region" description="Helical" evidence="1">
    <location>
        <begin position="86"/>
        <end position="106"/>
    </location>
</feature>
<feature type="transmembrane region" description="Helical" evidence="1">
    <location>
        <begin position="128"/>
        <end position="148"/>
    </location>
</feature>
<feature type="transmembrane region" description="Helical" evidence="1">
    <location>
        <begin position="198"/>
        <end position="218"/>
    </location>
</feature>
<feature type="transmembrane region" description="Helical" evidence="1">
    <location>
        <begin position="280"/>
        <end position="300"/>
    </location>
</feature>
<feature type="transmembrane region" description="Helical" evidence="1">
    <location>
        <begin position="522"/>
        <end position="542"/>
    </location>
</feature>
<feature type="domain" description="ABC transporter 1" evidence="2">
    <location>
        <begin position="251"/>
        <end position="473"/>
    </location>
</feature>
<feature type="domain" description="ABC transporter 2" evidence="2">
    <location>
        <begin position="477"/>
        <end position="696"/>
    </location>
</feature>
<feature type="binding site" evidence="2">
    <location>
        <begin position="285"/>
        <end position="292"/>
    </location>
    <ligand>
        <name>ATP</name>
        <dbReference type="ChEBI" id="CHEBI:30616"/>
        <label>1</label>
    </ligand>
</feature>
<feature type="binding site" evidence="2">
    <location>
        <begin position="514"/>
        <end position="521"/>
    </location>
    <ligand>
        <name>ATP</name>
        <dbReference type="ChEBI" id="CHEBI:30616"/>
        <label>2</label>
    </ligand>
</feature>
<evidence type="ECO:0000255" key="1"/>
<evidence type="ECO:0000255" key="2">
    <source>
        <dbReference type="PROSITE-ProRule" id="PRU00434"/>
    </source>
</evidence>
<evidence type="ECO:0000305" key="3"/>
<sequence>MCCAVCGPEPGRIGEVTPLGPCPAQHRGGPLRPSELAQASVMAALCAVTAIISVVVPFAAGLALLGTVPTGLLAYRYRLRVLAAATVAAGMIAFLIAGLGGFMGVVHSAYIGGLTGIVKRRGRGTPTVVVSSLIGGFVFGAAMVGMLAAMVRLRHLIFKVMTANVDGIAATLARMHMQGAAADVKRYFAEGLQYWPWVLLGYFNIGIMIVSLIGWWALSRLLERMRGIPDVHKLDPPPGDDVDALIGPVPVRLDKVRFRYPRAGQDALREVSLDVRAGEHLAIIGANGSGKTTLMLILAGRAPTSGTVDRPGTVGLGKLGGTAVVLQHPESQVLGTRVADDVVWGLPLGTTADVGRLLSEVGLEALAERDTGSLSGGELQRLALAAALAREPAMLIADEVTTMVDQQGRDALLAVLSGLTQRHRTALVHITHYDNEADSADRTLSLSDSPDNTDMVHTAAMPAPVIGVDQPQHAPALELVGVGHEYASGTPWAKTALRDINFVVEQGDGVLIHGGNGSGKSTLAWIMAGLTIPTTGACLLDGRPTHEQVGAVALSFQAARLQLMRSRVDLEVASAAGFSASEQDRVAAALTVVGLDPALGARRIDQLSGGQMRRVVLAGLLARAPRALILDEPLAGLDAASQRGLLRLLEDLRRARGLTVVVVSHDFAGMEELCPRTLHLRDGVLESAAASEAGGMS</sequence>
<gene>
    <name type="ordered locus">Rv2326c</name>
    <name type="ORF">MTCY3G12.08</name>
</gene>
<comment type="subcellular location">
    <subcellularLocation>
        <location evidence="3">Cell membrane</location>
        <topology evidence="3">Multi-pass membrane protein</topology>
    </subcellularLocation>
</comment>
<comment type="similarity">
    <text evidence="3">Belongs to the ABC transporter superfamily.</text>
</comment>
<organism>
    <name type="scientific">Mycobacterium tuberculosis (strain ATCC 25618 / H37Rv)</name>
    <dbReference type="NCBI Taxonomy" id="83332"/>
    <lineage>
        <taxon>Bacteria</taxon>
        <taxon>Bacillati</taxon>
        <taxon>Actinomycetota</taxon>
        <taxon>Actinomycetes</taxon>
        <taxon>Mycobacteriales</taxon>
        <taxon>Mycobacteriaceae</taxon>
        <taxon>Mycobacterium</taxon>
        <taxon>Mycobacterium tuberculosis complex</taxon>
    </lineage>
</organism>
<reference key="1">
    <citation type="journal article" date="1998" name="Nature">
        <title>Deciphering the biology of Mycobacterium tuberculosis from the complete genome sequence.</title>
        <authorList>
            <person name="Cole S.T."/>
            <person name="Brosch R."/>
            <person name="Parkhill J."/>
            <person name="Garnier T."/>
            <person name="Churcher C.M."/>
            <person name="Harris D.E."/>
            <person name="Gordon S.V."/>
            <person name="Eiglmeier K."/>
            <person name="Gas S."/>
            <person name="Barry C.E. III"/>
            <person name="Tekaia F."/>
            <person name="Badcock K."/>
            <person name="Basham D."/>
            <person name="Brown D."/>
            <person name="Chillingworth T."/>
            <person name="Connor R."/>
            <person name="Davies R.M."/>
            <person name="Devlin K."/>
            <person name="Feltwell T."/>
            <person name="Gentles S."/>
            <person name="Hamlin N."/>
            <person name="Holroyd S."/>
            <person name="Hornsby T."/>
            <person name="Jagels K."/>
            <person name="Krogh A."/>
            <person name="McLean J."/>
            <person name="Moule S."/>
            <person name="Murphy L.D."/>
            <person name="Oliver S."/>
            <person name="Osborne J."/>
            <person name="Quail M.A."/>
            <person name="Rajandream M.A."/>
            <person name="Rogers J."/>
            <person name="Rutter S."/>
            <person name="Seeger K."/>
            <person name="Skelton S."/>
            <person name="Squares S."/>
            <person name="Squares R."/>
            <person name="Sulston J.E."/>
            <person name="Taylor K."/>
            <person name="Whitehead S."/>
            <person name="Barrell B.G."/>
        </authorList>
    </citation>
    <scope>NUCLEOTIDE SEQUENCE [LARGE SCALE GENOMIC DNA]</scope>
    <source>
        <strain>ATCC 25618 / H37Rv</strain>
    </source>
</reference>
<reference key="2">
    <citation type="journal article" date="2011" name="Mol. Cell. Proteomics">
        <title>Proteogenomic analysis of Mycobacterium tuberculosis by high resolution mass spectrometry.</title>
        <authorList>
            <person name="Kelkar D.S."/>
            <person name="Kumar D."/>
            <person name="Kumar P."/>
            <person name="Balakrishnan L."/>
            <person name="Muthusamy B."/>
            <person name="Yadav A.K."/>
            <person name="Shrivastava P."/>
            <person name="Marimuthu A."/>
            <person name="Anand S."/>
            <person name="Sundaram H."/>
            <person name="Kingsbury R."/>
            <person name="Harsha H.C."/>
            <person name="Nair B."/>
            <person name="Prasad T.S."/>
            <person name="Chauhan D.S."/>
            <person name="Katoch K."/>
            <person name="Katoch V.M."/>
            <person name="Kumar P."/>
            <person name="Chaerkady R."/>
            <person name="Ramachandran S."/>
            <person name="Dash D."/>
            <person name="Pandey A."/>
        </authorList>
    </citation>
    <scope>IDENTIFICATION BY MASS SPECTROMETRY [LARGE SCALE ANALYSIS]</scope>
    <source>
        <strain>ATCC 25618 / H37Rv</strain>
    </source>
</reference>
<dbReference type="EMBL" id="AL123456">
    <property type="protein sequence ID" value="CCP45113.1"/>
    <property type="molecule type" value="Genomic_DNA"/>
</dbReference>
<dbReference type="PIR" id="G70704">
    <property type="entry name" value="G70704"/>
</dbReference>
<dbReference type="RefSeq" id="NP_216842.1">
    <property type="nucleotide sequence ID" value="NC_000962.3"/>
</dbReference>
<dbReference type="RefSeq" id="WP_003411969.1">
    <property type="nucleotide sequence ID" value="NC_000962.3"/>
</dbReference>
<dbReference type="SMR" id="P9WQI7"/>
<dbReference type="STRING" id="83332.Rv2326c"/>
<dbReference type="PaxDb" id="83332-Rv2326c"/>
<dbReference type="DNASU" id="888184"/>
<dbReference type="GeneID" id="888184"/>
<dbReference type="KEGG" id="mtu:Rv2326c"/>
<dbReference type="KEGG" id="mtv:RVBD_2326c"/>
<dbReference type="PATRIC" id="fig|83332.111.peg.2590"/>
<dbReference type="TubercuList" id="Rv2326c"/>
<dbReference type="eggNOG" id="COG1122">
    <property type="taxonomic scope" value="Bacteria"/>
</dbReference>
<dbReference type="InParanoid" id="P9WQI7"/>
<dbReference type="OrthoDB" id="501320at2"/>
<dbReference type="PhylomeDB" id="P9WQI7"/>
<dbReference type="Proteomes" id="UP000001584">
    <property type="component" value="Chromosome"/>
</dbReference>
<dbReference type="GO" id="GO:0043190">
    <property type="term" value="C:ATP-binding cassette (ABC) transporter complex"/>
    <property type="evidence" value="ECO:0000318"/>
    <property type="project" value="GO_Central"/>
</dbReference>
<dbReference type="GO" id="GO:0009274">
    <property type="term" value="C:peptidoglycan-based cell wall"/>
    <property type="evidence" value="ECO:0007005"/>
    <property type="project" value="MTBBASE"/>
</dbReference>
<dbReference type="GO" id="GO:0005886">
    <property type="term" value="C:plasma membrane"/>
    <property type="evidence" value="ECO:0007005"/>
    <property type="project" value="MTBBASE"/>
</dbReference>
<dbReference type="GO" id="GO:0005524">
    <property type="term" value="F:ATP binding"/>
    <property type="evidence" value="ECO:0000318"/>
    <property type="project" value="GO_Central"/>
</dbReference>
<dbReference type="GO" id="GO:0016887">
    <property type="term" value="F:ATP hydrolysis activity"/>
    <property type="evidence" value="ECO:0007669"/>
    <property type="project" value="InterPro"/>
</dbReference>
<dbReference type="GO" id="GO:0042626">
    <property type="term" value="F:ATPase-coupled transmembrane transporter activity"/>
    <property type="evidence" value="ECO:0000318"/>
    <property type="project" value="GO_Central"/>
</dbReference>
<dbReference type="CDD" id="cd03225">
    <property type="entry name" value="ABC_cobalt_CbiO_domain1"/>
    <property type="match status" value="2"/>
</dbReference>
<dbReference type="FunFam" id="3.40.50.300:FF:002423">
    <property type="entry name" value="Cobalt ABC transporter ATP-binding protein"/>
    <property type="match status" value="1"/>
</dbReference>
<dbReference type="Gene3D" id="3.40.50.300">
    <property type="entry name" value="P-loop containing nucleotide triphosphate hydrolases"/>
    <property type="match status" value="2"/>
</dbReference>
<dbReference type="InterPro" id="IPR003593">
    <property type="entry name" value="AAA+_ATPase"/>
</dbReference>
<dbReference type="InterPro" id="IPR003439">
    <property type="entry name" value="ABC_transporter-like_ATP-bd"/>
</dbReference>
<dbReference type="InterPro" id="IPR017871">
    <property type="entry name" value="ABC_transporter-like_CS"/>
</dbReference>
<dbReference type="InterPro" id="IPR015856">
    <property type="entry name" value="ABC_transpr_CbiO/EcfA_su"/>
</dbReference>
<dbReference type="InterPro" id="IPR050095">
    <property type="entry name" value="ECF_ABC_transporter_ATP-bd"/>
</dbReference>
<dbReference type="InterPro" id="IPR027417">
    <property type="entry name" value="P-loop_NTPase"/>
</dbReference>
<dbReference type="PANTHER" id="PTHR43553:SF24">
    <property type="entry name" value="ENERGY-COUPLING FACTOR TRANSPORTER ATP-BINDING PROTEIN ECFA1"/>
    <property type="match status" value="1"/>
</dbReference>
<dbReference type="PANTHER" id="PTHR43553">
    <property type="entry name" value="HEAVY METAL TRANSPORTER"/>
    <property type="match status" value="1"/>
</dbReference>
<dbReference type="Pfam" id="PF00005">
    <property type="entry name" value="ABC_tran"/>
    <property type="match status" value="2"/>
</dbReference>
<dbReference type="SMART" id="SM00382">
    <property type="entry name" value="AAA"/>
    <property type="match status" value="2"/>
</dbReference>
<dbReference type="SUPFAM" id="SSF52540">
    <property type="entry name" value="P-loop containing nucleoside triphosphate hydrolases"/>
    <property type="match status" value="2"/>
</dbReference>
<dbReference type="PROSITE" id="PS00211">
    <property type="entry name" value="ABC_TRANSPORTER_1"/>
    <property type="match status" value="2"/>
</dbReference>
<dbReference type="PROSITE" id="PS50893">
    <property type="entry name" value="ABC_TRANSPORTER_2"/>
    <property type="match status" value="2"/>
</dbReference>
<accession>P9WQI7</accession>
<accession>L0TAW1</accession>
<accession>P63399</accession>
<accession>P71886</accession>
<protein>
    <recommendedName>
        <fullName>Uncharacterized ABC transporter ATP-binding protein Rv2326c</fullName>
    </recommendedName>
</protein>
<proteinExistence type="evidence at protein level"/>
<name>Y2326_MYCTU</name>